<protein>
    <recommendedName>
        <fullName evidence="1">7-cyano-7-deazaguanine synthase</fullName>
        <ecNumber evidence="1">6.3.4.20</ecNumber>
    </recommendedName>
    <alternativeName>
        <fullName evidence="1">7-cyano-7-carbaguanine synthase</fullName>
    </alternativeName>
    <alternativeName>
        <fullName evidence="1">PreQ(0) synthase</fullName>
    </alternativeName>
    <alternativeName>
        <fullName evidence="1">Queuosine biosynthesis protein QueC</fullName>
    </alternativeName>
</protein>
<accession>A8YZY3</accession>
<feature type="chain" id="PRO_0000336957" description="7-cyano-7-deazaguanine synthase">
    <location>
        <begin position="1"/>
        <end position="222"/>
    </location>
</feature>
<feature type="binding site" evidence="1">
    <location>
        <begin position="14"/>
        <end position="24"/>
    </location>
    <ligand>
        <name>ATP</name>
        <dbReference type="ChEBI" id="CHEBI:30616"/>
    </ligand>
</feature>
<feature type="binding site" evidence="1">
    <location>
        <position position="190"/>
    </location>
    <ligand>
        <name>Zn(2+)</name>
        <dbReference type="ChEBI" id="CHEBI:29105"/>
    </ligand>
</feature>
<feature type="binding site" evidence="1">
    <location>
        <position position="199"/>
    </location>
    <ligand>
        <name>Zn(2+)</name>
        <dbReference type="ChEBI" id="CHEBI:29105"/>
    </ligand>
</feature>
<feature type="binding site" evidence="1">
    <location>
        <position position="202"/>
    </location>
    <ligand>
        <name>Zn(2+)</name>
        <dbReference type="ChEBI" id="CHEBI:29105"/>
    </ligand>
</feature>
<feature type="binding site" evidence="1">
    <location>
        <position position="205"/>
    </location>
    <ligand>
        <name>Zn(2+)</name>
        <dbReference type="ChEBI" id="CHEBI:29105"/>
    </ligand>
</feature>
<reference key="1">
    <citation type="journal article" date="2007" name="BMC Microbiol.">
        <title>Subtle genetic changes enhance virulence of methicillin resistant and sensitive Staphylococcus aureus.</title>
        <authorList>
            <person name="Highlander S.K."/>
            <person name="Hulten K.G."/>
            <person name="Qin X."/>
            <person name="Jiang H."/>
            <person name="Yerrapragada S."/>
            <person name="Mason E.O. Jr."/>
            <person name="Shang Y."/>
            <person name="Williams T.M."/>
            <person name="Fortunov R.M."/>
            <person name="Liu Y."/>
            <person name="Igboeli O."/>
            <person name="Petrosino J."/>
            <person name="Tirumalai M."/>
            <person name="Uzman A."/>
            <person name="Fox G.E."/>
            <person name="Cardenas A.M."/>
            <person name="Muzny D.M."/>
            <person name="Hemphill L."/>
            <person name="Ding Y."/>
            <person name="Dugan S."/>
            <person name="Blyth P.R."/>
            <person name="Buhay C.J."/>
            <person name="Dinh H.H."/>
            <person name="Hawes A.C."/>
            <person name="Holder M."/>
            <person name="Kovar C.L."/>
            <person name="Lee S.L."/>
            <person name="Liu W."/>
            <person name="Nazareth L.V."/>
            <person name="Wang Q."/>
            <person name="Zhou J."/>
            <person name="Kaplan S.L."/>
            <person name="Weinstock G.M."/>
        </authorList>
    </citation>
    <scope>NUCLEOTIDE SEQUENCE [LARGE SCALE GENOMIC DNA]</scope>
    <source>
        <strain>USA300 / TCH1516</strain>
    </source>
</reference>
<comment type="function">
    <text evidence="1">Catalyzes the ATP-dependent conversion of 7-carboxy-7-deazaguanine (CDG) to 7-cyano-7-deazaguanine (preQ(0)).</text>
</comment>
<comment type="catalytic activity">
    <reaction evidence="1">
        <text>7-carboxy-7-deazaguanine + NH4(+) + ATP = 7-cyano-7-deazaguanine + ADP + phosphate + H2O + H(+)</text>
        <dbReference type="Rhea" id="RHEA:27982"/>
        <dbReference type="ChEBI" id="CHEBI:15377"/>
        <dbReference type="ChEBI" id="CHEBI:15378"/>
        <dbReference type="ChEBI" id="CHEBI:28938"/>
        <dbReference type="ChEBI" id="CHEBI:30616"/>
        <dbReference type="ChEBI" id="CHEBI:43474"/>
        <dbReference type="ChEBI" id="CHEBI:45075"/>
        <dbReference type="ChEBI" id="CHEBI:61036"/>
        <dbReference type="ChEBI" id="CHEBI:456216"/>
        <dbReference type="EC" id="6.3.4.20"/>
    </reaction>
</comment>
<comment type="cofactor">
    <cofactor evidence="1">
        <name>Zn(2+)</name>
        <dbReference type="ChEBI" id="CHEBI:29105"/>
    </cofactor>
    <text evidence="1">Binds 1 zinc ion per subunit.</text>
</comment>
<comment type="pathway">
    <text evidence="1">Purine metabolism; 7-cyano-7-deazaguanine biosynthesis.</text>
</comment>
<comment type="subunit">
    <text evidence="1">Homodimer.</text>
</comment>
<comment type="similarity">
    <text evidence="1">Belongs to the QueC family.</text>
</comment>
<organism>
    <name type="scientific">Staphylococcus aureus (strain USA300 / TCH1516)</name>
    <dbReference type="NCBI Taxonomy" id="451516"/>
    <lineage>
        <taxon>Bacteria</taxon>
        <taxon>Bacillati</taxon>
        <taxon>Bacillota</taxon>
        <taxon>Bacilli</taxon>
        <taxon>Bacillales</taxon>
        <taxon>Staphylococcaceae</taxon>
        <taxon>Staphylococcus</taxon>
    </lineage>
</organism>
<keyword id="KW-0067">ATP-binding</keyword>
<keyword id="KW-0436">Ligase</keyword>
<keyword id="KW-0479">Metal-binding</keyword>
<keyword id="KW-0547">Nucleotide-binding</keyword>
<keyword id="KW-0671">Queuosine biosynthesis</keyword>
<keyword id="KW-0862">Zinc</keyword>
<sequence length="222" mass="24887">MESVLNNEKAIVVFSGGQDSTTCLFYAKKHFKEVELVTFNYGQRHDTEIEVAKQIAQDQGMKHHVLDMSLLSQLTPNALTQHDMEITNNEDGIPNTFVPARNLLFLSFAGALAYQIGAKHIITGVCETDFSGYPDCRDSFIKSMNVTLSLAMDKDFVIHTPLMWLNKAETWKLSDELEVLDYIRTKTLTCYNGIIGDGCGECPACHLRQRGLNQYLESKGAL</sequence>
<evidence type="ECO:0000255" key="1">
    <source>
        <dbReference type="HAMAP-Rule" id="MF_01633"/>
    </source>
</evidence>
<proteinExistence type="inferred from homology"/>
<dbReference type="EC" id="6.3.4.20" evidence="1"/>
<dbReference type="EMBL" id="CP000730">
    <property type="protein sequence ID" value="ABX28756.1"/>
    <property type="molecule type" value="Genomic_DNA"/>
</dbReference>
<dbReference type="RefSeq" id="WP_000446724.1">
    <property type="nucleotide sequence ID" value="NC_010079.1"/>
</dbReference>
<dbReference type="SMR" id="A8YZY3"/>
<dbReference type="KEGG" id="sax:USA300HOU_0735"/>
<dbReference type="HOGENOM" id="CLU_081854_0_0_9"/>
<dbReference type="UniPathway" id="UPA00391"/>
<dbReference type="GO" id="GO:0005524">
    <property type="term" value="F:ATP binding"/>
    <property type="evidence" value="ECO:0007669"/>
    <property type="project" value="UniProtKB-UniRule"/>
</dbReference>
<dbReference type="GO" id="GO:0016879">
    <property type="term" value="F:ligase activity, forming carbon-nitrogen bonds"/>
    <property type="evidence" value="ECO:0007669"/>
    <property type="project" value="UniProtKB-UniRule"/>
</dbReference>
<dbReference type="GO" id="GO:0008270">
    <property type="term" value="F:zinc ion binding"/>
    <property type="evidence" value="ECO:0007669"/>
    <property type="project" value="UniProtKB-UniRule"/>
</dbReference>
<dbReference type="GO" id="GO:0008616">
    <property type="term" value="P:queuosine biosynthetic process"/>
    <property type="evidence" value="ECO:0007669"/>
    <property type="project" value="UniProtKB-UniRule"/>
</dbReference>
<dbReference type="CDD" id="cd01995">
    <property type="entry name" value="QueC-like"/>
    <property type="match status" value="1"/>
</dbReference>
<dbReference type="FunFam" id="3.40.50.620:FF:000017">
    <property type="entry name" value="7-cyano-7-deazaguanine synthase"/>
    <property type="match status" value="1"/>
</dbReference>
<dbReference type="Gene3D" id="3.40.50.620">
    <property type="entry name" value="HUPs"/>
    <property type="match status" value="1"/>
</dbReference>
<dbReference type="HAMAP" id="MF_01633">
    <property type="entry name" value="QueC"/>
    <property type="match status" value="1"/>
</dbReference>
<dbReference type="InterPro" id="IPR018317">
    <property type="entry name" value="QueC"/>
</dbReference>
<dbReference type="InterPro" id="IPR014729">
    <property type="entry name" value="Rossmann-like_a/b/a_fold"/>
</dbReference>
<dbReference type="NCBIfam" id="TIGR00364">
    <property type="entry name" value="7-cyano-7-deazaguanine synthase QueC"/>
    <property type="match status" value="1"/>
</dbReference>
<dbReference type="PANTHER" id="PTHR42914">
    <property type="entry name" value="7-CYANO-7-DEAZAGUANINE SYNTHASE"/>
    <property type="match status" value="1"/>
</dbReference>
<dbReference type="PANTHER" id="PTHR42914:SF1">
    <property type="entry name" value="7-CYANO-7-DEAZAGUANINE SYNTHASE"/>
    <property type="match status" value="1"/>
</dbReference>
<dbReference type="Pfam" id="PF06508">
    <property type="entry name" value="QueC"/>
    <property type="match status" value="1"/>
</dbReference>
<dbReference type="PIRSF" id="PIRSF006293">
    <property type="entry name" value="ExsB"/>
    <property type="match status" value="1"/>
</dbReference>
<dbReference type="SUPFAM" id="SSF52402">
    <property type="entry name" value="Adenine nucleotide alpha hydrolases-like"/>
    <property type="match status" value="1"/>
</dbReference>
<name>QUEC_STAAT</name>
<gene>
    <name evidence="1" type="primary">queC</name>
    <name type="ordered locus">USA300HOU_0735</name>
</gene>